<proteinExistence type="inferred from homology"/>
<organism>
    <name type="scientific">Sulfurisphaera tokodaii (strain DSM 16993 / JCM 10545 / NBRC 100140 / 7)</name>
    <name type="common">Sulfolobus tokodaii</name>
    <dbReference type="NCBI Taxonomy" id="273063"/>
    <lineage>
        <taxon>Archaea</taxon>
        <taxon>Thermoproteota</taxon>
        <taxon>Thermoprotei</taxon>
        <taxon>Sulfolobales</taxon>
        <taxon>Sulfolobaceae</taxon>
        <taxon>Sulfurisphaera</taxon>
    </lineage>
</organism>
<evidence type="ECO:0000255" key="1">
    <source>
        <dbReference type="HAMAP-Rule" id="MF_01286"/>
    </source>
</evidence>
<feature type="chain" id="PRO_0000350720" description="Digeranylgeranylglyceryl phosphate synthase">
    <location>
        <begin position="1"/>
        <end position="278"/>
    </location>
</feature>
<feature type="transmembrane region" description="Helical" evidence="1">
    <location>
        <begin position="15"/>
        <end position="35"/>
    </location>
</feature>
<feature type="transmembrane region" description="Helical" evidence="1">
    <location>
        <begin position="36"/>
        <end position="56"/>
    </location>
</feature>
<feature type="transmembrane region" description="Helical" evidence="1">
    <location>
        <begin position="89"/>
        <end position="109"/>
    </location>
</feature>
<feature type="transmembrane region" description="Helical" evidence="1">
    <location>
        <begin position="133"/>
        <end position="153"/>
    </location>
</feature>
<feature type="transmembrane region" description="Helical" evidence="1">
    <location>
        <begin position="159"/>
        <end position="179"/>
    </location>
</feature>
<feature type="transmembrane region" description="Helical" evidence="1">
    <location>
        <begin position="203"/>
        <end position="223"/>
    </location>
</feature>
<feature type="transmembrane region" description="Helical" evidence="1">
    <location>
        <begin position="225"/>
        <end position="245"/>
    </location>
</feature>
<feature type="transmembrane region" description="Helical" evidence="1">
    <location>
        <begin position="258"/>
        <end position="278"/>
    </location>
</feature>
<protein>
    <recommendedName>
        <fullName evidence="1">Digeranylgeranylglyceryl phosphate synthase</fullName>
        <shortName evidence="1">DGGGP synthase</shortName>
        <shortName evidence="1">DGGGPS</shortName>
        <ecNumber evidence="1">2.5.1.42</ecNumber>
    </recommendedName>
    <alternativeName>
        <fullName evidence="1">(S)-2,3-di-O-geranylgeranylglyceryl phosphate synthase</fullName>
    </alternativeName>
    <alternativeName>
        <fullName evidence="1">Geranylgeranylglycerol-phosphate geranylgeranyltransferase</fullName>
    </alternativeName>
</protein>
<comment type="function">
    <text evidence="1">Prenyltransferase that catalyzes the transfer of the geranylgeranyl moiety of geranylgeranyl diphosphate (GGPP) to the C2 hydroxyl of (S)-3-O-geranylgeranylglyceryl phosphate (GGGP). This reaction is the second ether-bond-formation step in the biosynthesis of archaeal membrane lipids.</text>
</comment>
<comment type="catalytic activity">
    <reaction evidence="1">
        <text>sn-3-O-(geranylgeranyl)glycerol 1-phosphate + (2E,6E,10E)-geranylgeranyl diphosphate = 2,3-bis-O-(geranylgeranyl)-sn-glycerol 1-phosphate + diphosphate</text>
        <dbReference type="Rhea" id="RHEA:18109"/>
        <dbReference type="ChEBI" id="CHEBI:33019"/>
        <dbReference type="ChEBI" id="CHEBI:57677"/>
        <dbReference type="ChEBI" id="CHEBI:58756"/>
        <dbReference type="ChEBI" id="CHEBI:58837"/>
        <dbReference type="EC" id="2.5.1.42"/>
    </reaction>
</comment>
<comment type="cofactor">
    <cofactor evidence="1">
        <name>Mg(2+)</name>
        <dbReference type="ChEBI" id="CHEBI:18420"/>
    </cofactor>
</comment>
<comment type="pathway">
    <text evidence="1">Membrane lipid metabolism; glycerophospholipid metabolism.</text>
</comment>
<comment type="subcellular location">
    <subcellularLocation>
        <location evidence="1">Cell membrane</location>
        <topology evidence="1">Multi-pass membrane protein</topology>
    </subcellularLocation>
</comment>
<comment type="similarity">
    <text evidence="1">Belongs to the UbiA prenyltransferase family. DGGGP synthase subfamily.</text>
</comment>
<accession>Q971A3</accession>
<name>DGGGP_SULTO</name>
<dbReference type="EC" id="2.5.1.42" evidence="1"/>
<dbReference type="EMBL" id="BA000023">
    <property type="protein sequence ID" value="BAB66520.1"/>
    <property type="molecule type" value="Genomic_DNA"/>
</dbReference>
<dbReference type="RefSeq" id="WP_010979498.1">
    <property type="nucleotide sequence ID" value="NC_003106.2"/>
</dbReference>
<dbReference type="SMR" id="Q971A3"/>
<dbReference type="STRING" id="273063.STK_14510"/>
<dbReference type="GeneID" id="1459484"/>
<dbReference type="KEGG" id="sto:STK_14510"/>
<dbReference type="PATRIC" id="fig|273063.9.peg.1653"/>
<dbReference type="eggNOG" id="arCOG00476">
    <property type="taxonomic scope" value="Archaea"/>
</dbReference>
<dbReference type="OrthoDB" id="11851at2157"/>
<dbReference type="UniPathway" id="UPA00940"/>
<dbReference type="Proteomes" id="UP000001015">
    <property type="component" value="Chromosome"/>
</dbReference>
<dbReference type="GO" id="GO:0005886">
    <property type="term" value="C:plasma membrane"/>
    <property type="evidence" value="ECO:0007669"/>
    <property type="project" value="UniProtKB-SubCell"/>
</dbReference>
<dbReference type="GO" id="GO:0047295">
    <property type="term" value="F:geranylgeranylglycerol-phosphate geranylgeranyltransferase activity"/>
    <property type="evidence" value="ECO:0007669"/>
    <property type="project" value="UniProtKB-UniRule"/>
</dbReference>
<dbReference type="GO" id="GO:0000287">
    <property type="term" value="F:magnesium ion binding"/>
    <property type="evidence" value="ECO:0007669"/>
    <property type="project" value="UniProtKB-UniRule"/>
</dbReference>
<dbReference type="GO" id="GO:0046474">
    <property type="term" value="P:glycerophospholipid biosynthetic process"/>
    <property type="evidence" value="ECO:0007669"/>
    <property type="project" value="UniProtKB-UniRule"/>
</dbReference>
<dbReference type="CDD" id="cd13961">
    <property type="entry name" value="PT_UbiA_DGGGPS"/>
    <property type="match status" value="1"/>
</dbReference>
<dbReference type="Gene3D" id="1.10.357.140">
    <property type="entry name" value="UbiA prenyltransferase"/>
    <property type="match status" value="1"/>
</dbReference>
<dbReference type="Gene3D" id="1.20.120.1780">
    <property type="entry name" value="UbiA prenyltransferase"/>
    <property type="match status" value="1"/>
</dbReference>
<dbReference type="HAMAP" id="MF_01286">
    <property type="entry name" value="DGGGP_synth"/>
    <property type="match status" value="1"/>
</dbReference>
<dbReference type="InterPro" id="IPR023547">
    <property type="entry name" value="DGGGP_synth"/>
</dbReference>
<dbReference type="InterPro" id="IPR050475">
    <property type="entry name" value="Prenyltransferase_related"/>
</dbReference>
<dbReference type="InterPro" id="IPR000537">
    <property type="entry name" value="UbiA_prenyltransferase"/>
</dbReference>
<dbReference type="InterPro" id="IPR044878">
    <property type="entry name" value="UbiA_sf"/>
</dbReference>
<dbReference type="PANTHER" id="PTHR42723">
    <property type="entry name" value="CHLOROPHYLL SYNTHASE"/>
    <property type="match status" value="1"/>
</dbReference>
<dbReference type="PANTHER" id="PTHR42723:SF1">
    <property type="entry name" value="CHLOROPHYLL SYNTHASE, CHLOROPLASTIC"/>
    <property type="match status" value="1"/>
</dbReference>
<dbReference type="Pfam" id="PF01040">
    <property type="entry name" value="UbiA"/>
    <property type="match status" value="1"/>
</dbReference>
<sequence length="278" mass="30909">MSVKAYFELVRIHNVIGSAISVFMGYVVASEWKIVPIKLILAMIVVSVIAAGGYIINDVFDIEIDKINKPNRPLPSGRIKISRARSLSIVLFLVGIVLSVLLNIYAFIIALLTVLALYYYAKDLKKQGLVGNLIVALTSALSAFYGGLAFFEGSWVIRTLIPTLYIFFFTLTREFVKGIEDVKGDMTNGVKTLAVRVGIEKTWFISKIILVILIVTSFIPYFFGFNIIYLIGILFLDIILILVVLLRHDIESASKARAYMKVYALGTLILFALGTLPI</sequence>
<reference key="1">
    <citation type="journal article" date="2001" name="DNA Res.">
        <title>Complete genome sequence of an aerobic thermoacidophilic Crenarchaeon, Sulfolobus tokodaii strain7.</title>
        <authorList>
            <person name="Kawarabayasi Y."/>
            <person name="Hino Y."/>
            <person name="Horikawa H."/>
            <person name="Jin-no K."/>
            <person name="Takahashi M."/>
            <person name="Sekine M."/>
            <person name="Baba S."/>
            <person name="Ankai A."/>
            <person name="Kosugi H."/>
            <person name="Hosoyama A."/>
            <person name="Fukui S."/>
            <person name="Nagai Y."/>
            <person name="Nishijima K."/>
            <person name="Otsuka R."/>
            <person name="Nakazawa H."/>
            <person name="Takamiya M."/>
            <person name="Kato Y."/>
            <person name="Yoshizawa T."/>
            <person name="Tanaka T."/>
            <person name="Kudoh Y."/>
            <person name="Yamazaki J."/>
            <person name="Kushida N."/>
            <person name="Oguchi A."/>
            <person name="Aoki K."/>
            <person name="Masuda S."/>
            <person name="Yanagii M."/>
            <person name="Nishimura M."/>
            <person name="Yamagishi A."/>
            <person name="Oshima T."/>
            <person name="Kikuchi H."/>
        </authorList>
    </citation>
    <scope>NUCLEOTIDE SEQUENCE [LARGE SCALE GENOMIC DNA]</scope>
    <source>
        <strain>DSM 16993 / JCM 10545 / NBRC 100140 / 7</strain>
    </source>
</reference>
<gene>
    <name type="ordered locus">STK_14510</name>
</gene>
<keyword id="KW-1003">Cell membrane</keyword>
<keyword id="KW-0444">Lipid biosynthesis</keyword>
<keyword id="KW-0443">Lipid metabolism</keyword>
<keyword id="KW-0460">Magnesium</keyword>
<keyword id="KW-0472">Membrane</keyword>
<keyword id="KW-0594">Phospholipid biosynthesis</keyword>
<keyword id="KW-1208">Phospholipid metabolism</keyword>
<keyword id="KW-1185">Reference proteome</keyword>
<keyword id="KW-0808">Transferase</keyword>
<keyword id="KW-0812">Transmembrane</keyword>
<keyword id="KW-1133">Transmembrane helix</keyword>